<protein>
    <recommendedName>
        <fullName evidence="1">V-type ATP synthase alpha chain</fullName>
        <ecNumber evidence="1">7.1.2.2</ecNumber>
    </recommendedName>
    <alternativeName>
        <fullName evidence="1">V-ATPase subunit A</fullName>
    </alternativeName>
</protein>
<name>VATA_NITOC</name>
<organism>
    <name type="scientific">Nitrosococcus oceani (strain ATCC 19707 / BCRC 17464 / JCM 30415 / NCIMB 11848 / C-107)</name>
    <dbReference type="NCBI Taxonomy" id="323261"/>
    <lineage>
        <taxon>Bacteria</taxon>
        <taxon>Pseudomonadati</taxon>
        <taxon>Pseudomonadota</taxon>
        <taxon>Gammaproteobacteria</taxon>
        <taxon>Chromatiales</taxon>
        <taxon>Chromatiaceae</taxon>
        <taxon>Nitrosococcus</taxon>
    </lineage>
</organism>
<sequence>MGKLLEVNGPLVRARLPQVPNGEQVRIGTLGLVGEVIGREGQEALIQVYEGTESVRPGEEVEALGHPLSVELGPGLLGQVFDGIQRPLGRLLEASGDRISRGIQIQGLEQARVWRFQPNPQLAAGMAVTGGVCLGAVPETPTIEHRILVPPGLSGELLELAPEGEYRLSDVIARLDMGDHRSQALTLSHRWPVRNPRPYQQREHGVSPLMTGQRILDTFFPLLKGGKAAVPGPFGAGKTMVQQQIARWSNADIVIYVGCGERGNELVEVLDSFPELTDPHTGRSLMERTLLVANTSNMPVVAREASLYVGVTLGEYYRDQGYDVVIVADSTSRWAEALREVAGRLGQMPVEEGYPAYLASRLAAFYERAGRVQTLGGSVGSVTLIGAVSPPGGDFSEPVTSHTKEIVRTFWALSKDLADARHYPAVSWRESFSDDIPVAARWWAEHIDKHWQAGRAEAMTLLTQAEELSRIVNLVGPEALSGTQRWILEGATLIKEGLLQQSALDPVDSFCAPEKQFVLLDLMLQIYHQGVELLEQGVPVQELLGLPVLARARRCKSDYKNTQVETLQDFTKEIKEAFGRLGREHAEAGKI</sequence>
<accession>Q3J9F3</accession>
<keyword id="KW-0066">ATP synthesis</keyword>
<keyword id="KW-0067">ATP-binding</keyword>
<keyword id="KW-0375">Hydrogen ion transport</keyword>
<keyword id="KW-0406">Ion transport</keyword>
<keyword id="KW-0547">Nucleotide-binding</keyword>
<keyword id="KW-1185">Reference proteome</keyword>
<keyword id="KW-1278">Translocase</keyword>
<keyword id="KW-0813">Transport</keyword>
<evidence type="ECO:0000255" key="1">
    <source>
        <dbReference type="HAMAP-Rule" id="MF_00309"/>
    </source>
</evidence>
<reference key="1">
    <citation type="journal article" date="2006" name="Appl. Environ. Microbiol.">
        <title>Complete genome sequence of the marine, chemolithoautotrophic, ammonia-oxidizing bacterium Nitrosococcus oceani ATCC 19707.</title>
        <authorList>
            <person name="Klotz M.G."/>
            <person name="Arp D.J."/>
            <person name="Chain P.S.G."/>
            <person name="El-Sheikh A.F."/>
            <person name="Hauser L.J."/>
            <person name="Hommes N.G."/>
            <person name="Larimer F.W."/>
            <person name="Malfatti S.A."/>
            <person name="Norton J.M."/>
            <person name="Poret-Peterson A.T."/>
            <person name="Vergez L.M."/>
            <person name="Ward B.B."/>
        </authorList>
    </citation>
    <scope>NUCLEOTIDE SEQUENCE [LARGE SCALE GENOMIC DNA]</scope>
    <source>
        <strain>ATCC 19707 / BCRC 17464 / JCM 30415 / NCIMB 11848 / C-107</strain>
    </source>
</reference>
<proteinExistence type="inferred from homology"/>
<gene>
    <name evidence="1" type="primary">atpA</name>
    <name type="ordered locus">Noc_2083</name>
</gene>
<comment type="function">
    <text evidence="1">Produces ATP from ADP in the presence of a proton gradient across the membrane. The V-type alpha chain is a catalytic subunit.</text>
</comment>
<comment type="catalytic activity">
    <reaction evidence="1">
        <text>ATP + H2O + 4 H(+)(in) = ADP + phosphate + 5 H(+)(out)</text>
        <dbReference type="Rhea" id="RHEA:57720"/>
        <dbReference type="ChEBI" id="CHEBI:15377"/>
        <dbReference type="ChEBI" id="CHEBI:15378"/>
        <dbReference type="ChEBI" id="CHEBI:30616"/>
        <dbReference type="ChEBI" id="CHEBI:43474"/>
        <dbReference type="ChEBI" id="CHEBI:456216"/>
        <dbReference type="EC" id="7.1.2.2"/>
    </reaction>
</comment>
<comment type="similarity">
    <text evidence="1">Belongs to the ATPase alpha/beta chains family.</text>
</comment>
<dbReference type="EC" id="7.1.2.2" evidence="1"/>
<dbReference type="EMBL" id="CP000127">
    <property type="protein sequence ID" value="ABA58543.1"/>
    <property type="molecule type" value="Genomic_DNA"/>
</dbReference>
<dbReference type="RefSeq" id="WP_002809119.1">
    <property type="nucleotide sequence ID" value="NC_007484.1"/>
</dbReference>
<dbReference type="SMR" id="Q3J9F3"/>
<dbReference type="STRING" id="323261.Noc_2083"/>
<dbReference type="KEGG" id="noc:Noc_2083"/>
<dbReference type="eggNOG" id="COG1155">
    <property type="taxonomic scope" value="Bacteria"/>
</dbReference>
<dbReference type="HOGENOM" id="CLU_008162_3_1_6"/>
<dbReference type="InParanoid" id="Q3J9F3"/>
<dbReference type="Proteomes" id="UP000006838">
    <property type="component" value="Chromosome"/>
</dbReference>
<dbReference type="GO" id="GO:0005524">
    <property type="term" value="F:ATP binding"/>
    <property type="evidence" value="ECO:0007669"/>
    <property type="project" value="UniProtKB-UniRule"/>
</dbReference>
<dbReference type="GO" id="GO:0046933">
    <property type="term" value="F:proton-transporting ATP synthase activity, rotational mechanism"/>
    <property type="evidence" value="ECO:0007669"/>
    <property type="project" value="UniProtKB-UniRule"/>
</dbReference>
<dbReference type="GO" id="GO:0046961">
    <property type="term" value="F:proton-transporting ATPase activity, rotational mechanism"/>
    <property type="evidence" value="ECO:0007669"/>
    <property type="project" value="InterPro"/>
</dbReference>
<dbReference type="GO" id="GO:0042777">
    <property type="term" value="P:proton motive force-driven plasma membrane ATP synthesis"/>
    <property type="evidence" value="ECO:0007669"/>
    <property type="project" value="UniProtKB-UniRule"/>
</dbReference>
<dbReference type="CDD" id="cd18111">
    <property type="entry name" value="ATP-synt_V_A-type_alpha_C"/>
    <property type="match status" value="1"/>
</dbReference>
<dbReference type="CDD" id="cd01134">
    <property type="entry name" value="V_A-ATPase_A"/>
    <property type="match status" value="1"/>
</dbReference>
<dbReference type="Gene3D" id="2.40.30.20">
    <property type="match status" value="1"/>
</dbReference>
<dbReference type="Gene3D" id="2.40.50.100">
    <property type="match status" value="1"/>
</dbReference>
<dbReference type="Gene3D" id="1.10.1140.10">
    <property type="entry name" value="Bovine Mitochondrial F1-atpase, Atp Synthase Beta Chain, Chain D, domain 3"/>
    <property type="match status" value="1"/>
</dbReference>
<dbReference type="Gene3D" id="3.40.50.300">
    <property type="entry name" value="P-loop containing nucleotide triphosphate hydrolases"/>
    <property type="match status" value="1"/>
</dbReference>
<dbReference type="HAMAP" id="MF_00309">
    <property type="entry name" value="ATP_synth_A_arch"/>
    <property type="match status" value="1"/>
</dbReference>
<dbReference type="InterPro" id="IPR055190">
    <property type="entry name" value="ATP-synt_VA_C"/>
</dbReference>
<dbReference type="InterPro" id="IPR031686">
    <property type="entry name" value="ATP-synth_a_Xtn"/>
</dbReference>
<dbReference type="InterPro" id="IPR023366">
    <property type="entry name" value="ATP_synth_asu-like_sf"/>
</dbReference>
<dbReference type="InterPro" id="IPR004100">
    <property type="entry name" value="ATPase_F1/V1/A1_a/bsu_N"/>
</dbReference>
<dbReference type="InterPro" id="IPR000194">
    <property type="entry name" value="ATPase_F1/V1/A1_a/bsu_nucl-bd"/>
</dbReference>
<dbReference type="InterPro" id="IPR024034">
    <property type="entry name" value="ATPase_F1/V1_b/a_C"/>
</dbReference>
<dbReference type="InterPro" id="IPR027417">
    <property type="entry name" value="P-loop_NTPase"/>
</dbReference>
<dbReference type="InterPro" id="IPR022878">
    <property type="entry name" value="V-ATPase_asu"/>
</dbReference>
<dbReference type="NCBIfam" id="NF003220">
    <property type="entry name" value="PRK04192.1"/>
    <property type="match status" value="1"/>
</dbReference>
<dbReference type="PANTHER" id="PTHR43607:SF1">
    <property type="entry name" value="H(+)-TRANSPORTING TWO-SECTOR ATPASE"/>
    <property type="match status" value="1"/>
</dbReference>
<dbReference type="PANTHER" id="PTHR43607">
    <property type="entry name" value="V-TYPE PROTON ATPASE CATALYTIC SUBUNIT A"/>
    <property type="match status" value="1"/>
</dbReference>
<dbReference type="Pfam" id="PF00006">
    <property type="entry name" value="ATP-synt_ab"/>
    <property type="match status" value="1"/>
</dbReference>
<dbReference type="Pfam" id="PF02874">
    <property type="entry name" value="ATP-synt_ab_N"/>
    <property type="match status" value="1"/>
</dbReference>
<dbReference type="Pfam" id="PF16886">
    <property type="entry name" value="ATP-synt_ab_Xtn"/>
    <property type="match status" value="1"/>
</dbReference>
<dbReference type="Pfam" id="PF22919">
    <property type="entry name" value="ATP-synt_VA_C"/>
    <property type="match status" value="1"/>
</dbReference>
<dbReference type="SUPFAM" id="SSF47917">
    <property type="entry name" value="C-terminal domain of alpha and beta subunits of F1 ATP synthase"/>
    <property type="match status" value="1"/>
</dbReference>
<dbReference type="SUPFAM" id="SSF52540">
    <property type="entry name" value="P-loop containing nucleoside triphosphate hydrolases"/>
    <property type="match status" value="1"/>
</dbReference>
<feature type="chain" id="PRO_0000322467" description="V-type ATP synthase alpha chain">
    <location>
        <begin position="1"/>
        <end position="591"/>
    </location>
</feature>
<feature type="binding site" evidence="1">
    <location>
        <begin position="232"/>
        <end position="239"/>
    </location>
    <ligand>
        <name>ATP</name>
        <dbReference type="ChEBI" id="CHEBI:30616"/>
    </ligand>
</feature>